<protein>
    <recommendedName>
        <fullName evidence="1">Large ribosomal subunit protein uL24</fullName>
    </recommendedName>
    <alternativeName>
        <fullName evidence="3">50S ribosomal protein L24</fullName>
    </alternativeName>
</protein>
<evidence type="ECO:0000255" key="1">
    <source>
        <dbReference type="HAMAP-Rule" id="MF_01326"/>
    </source>
</evidence>
<evidence type="ECO:0000256" key="2">
    <source>
        <dbReference type="SAM" id="MobiDB-lite"/>
    </source>
</evidence>
<evidence type="ECO:0000305" key="3"/>
<comment type="function">
    <text evidence="1">One of two assembly initiator proteins, it binds directly to the 5'-end of the 23S rRNA, where it nucleates assembly of the 50S subunit.</text>
</comment>
<comment type="function">
    <text evidence="1">One of the proteins that surrounds the polypeptide exit tunnel on the outside of the subunit.</text>
</comment>
<comment type="subunit">
    <text evidence="1">Part of the 50S ribosomal subunit.</text>
</comment>
<comment type="similarity">
    <text evidence="1">Belongs to the universal ribosomal protein uL24 family.</text>
</comment>
<sequence length="73" mass="7924">MKSEIKKNDMVKVIAGDDKGKVAKVLAVLPKTSQVVVEGCKVVKKAIKPTDDNPKGGFIHKEKPMHISNVKKA</sequence>
<feature type="chain" id="PRO_1000142005" description="Large ribosomal subunit protein uL24">
    <location>
        <begin position="1"/>
        <end position="73"/>
    </location>
</feature>
<feature type="region of interest" description="Disordered" evidence="2">
    <location>
        <begin position="51"/>
        <end position="73"/>
    </location>
</feature>
<feature type="compositionally biased region" description="Basic and acidic residues" evidence="2">
    <location>
        <begin position="51"/>
        <end position="65"/>
    </location>
</feature>
<dbReference type="EMBL" id="CP001072">
    <property type="protein sequence ID" value="ACD48753.1"/>
    <property type="molecule type" value="Genomic_DNA"/>
</dbReference>
<dbReference type="RefSeq" id="WP_000834238.1">
    <property type="nucleotide sequence ID" value="NC_010698.2"/>
</dbReference>
<dbReference type="SMR" id="B2UV71"/>
<dbReference type="GeneID" id="93237561"/>
<dbReference type="KEGG" id="hps:HPSH_06765"/>
<dbReference type="HOGENOM" id="CLU_093315_3_0_7"/>
<dbReference type="GO" id="GO:1990904">
    <property type="term" value="C:ribonucleoprotein complex"/>
    <property type="evidence" value="ECO:0007669"/>
    <property type="project" value="UniProtKB-KW"/>
</dbReference>
<dbReference type="GO" id="GO:0005840">
    <property type="term" value="C:ribosome"/>
    <property type="evidence" value="ECO:0007669"/>
    <property type="project" value="UniProtKB-KW"/>
</dbReference>
<dbReference type="GO" id="GO:0019843">
    <property type="term" value="F:rRNA binding"/>
    <property type="evidence" value="ECO:0007669"/>
    <property type="project" value="UniProtKB-UniRule"/>
</dbReference>
<dbReference type="GO" id="GO:0003735">
    <property type="term" value="F:structural constituent of ribosome"/>
    <property type="evidence" value="ECO:0007669"/>
    <property type="project" value="InterPro"/>
</dbReference>
<dbReference type="GO" id="GO:0006412">
    <property type="term" value="P:translation"/>
    <property type="evidence" value="ECO:0007669"/>
    <property type="project" value="UniProtKB-UniRule"/>
</dbReference>
<dbReference type="CDD" id="cd06089">
    <property type="entry name" value="KOW_RPL26"/>
    <property type="match status" value="1"/>
</dbReference>
<dbReference type="FunFam" id="2.30.30.30:FF:000023">
    <property type="entry name" value="50S ribosomal protein L24"/>
    <property type="match status" value="1"/>
</dbReference>
<dbReference type="Gene3D" id="2.30.30.30">
    <property type="match status" value="1"/>
</dbReference>
<dbReference type="HAMAP" id="MF_01326_B">
    <property type="entry name" value="Ribosomal_uL24_B"/>
    <property type="match status" value="1"/>
</dbReference>
<dbReference type="InterPro" id="IPR005824">
    <property type="entry name" value="KOW"/>
</dbReference>
<dbReference type="InterPro" id="IPR014722">
    <property type="entry name" value="Rib_uL2_dom2"/>
</dbReference>
<dbReference type="InterPro" id="IPR003256">
    <property type="entry name" value="Ribosomal_uL24"/>
</dbReference>
<dbReference type="InterPro" id="IPR005825">
    <property type="entry name" value="Ribosomal_uL24_CS"/>
</dbReference>
<dbReference type="InterPro" id="IPR041988">
    <property type="entry name" value="Ribosomal_uL24_KOW"/>
</dbReference>
<dbReference type="InterPro" id="IPR008991">
    <property type="entry name" value="Translation_prot_SH3-like_sf"/>
</dbReference>
<dbReference type="NCBIfam" id="TIGR01079">
    <property type="entry name" value="rplX_bact"/>
    <property type="match status" value="1"/>
</dbReference>
<dbReference type="PANTHER" id="PTHR12903">
    <property type="entry name" value="MITOCHONDRIAL RIBOSOMAL PROTEIN L24"/>
    <property type="match status" value="1"/>
</dbReference>
<dbReference type="Pfam" id="PF00467">
    <property type="entry name" value="KOW"/>
    <property type="match status" value="1"/>
</dbReference>
<dbReference type="Pfam" id="PF17136">
    <property type="entry name" value="ribosomal_L24"/>
    <property type="match status" value="1"/>
</dbReference>
<dbReference type="SMART" id="SM00739">
    <property type="entry name" value="KOW"/>
    <property type="match status" value="1"/>
</dbReference>
<dbReference type="SUPFAM" id="SSF50104">
    <property type="entry name" value="Translation proteins SH3-like domain"/>
    <property type="match status" value="1"/>
</dbReference>
<dbReference type="PROSITE" id="PS01108">
    <property type="entry name" value="RIBOSOMAL_L24"/>
    <property type="match status" value="1"/>
</dbReference>
<gene>
    <name evidence="1" type="primary">rplX</name>
    <name type="ordered locus">HPSH_06765</name>
</gene>
<reference key="1">
    <citation type="submission" date="2008-05" db="EMBL/GenBank/DDBJ databases">
        <title>Genome sequence of Helicobacter pylori from the remote Amazon: traces of Asian ancestry of the first Americans.</title>
        <authorList>
            <person name="Kersulyte D."/>
            <person name="Kalia A."/>
            <person name="Gilman R.H."/>
            <person name="Berg D.E."/>
        </authorList>
    </citation>
    <scope>NUCLEOTIDE SEQUENCE [LARGE SCALE GENOMIC DNA]</scope>
    <source>
        <strain>Shi470</strain>
    </source>
</reference>
<keyword id="KW-0687">Ribonucleoprotein</keyword>
<keyword id="KW-0689">Ribosomal protein</keyword>
<keyword id="KW-0694">RNA-binding</keyword>
<keyword id="KW-0699">rRNA-binding</keyword>
<proteinExistence type="inferred from homology"/>
<organism>
    <name type="scientific">Helicobacter pylori (strain Shi470)</name>
    <dbReference type="NCBI Taxonomy" id="512562"/>
    <lineage>
        <taxon>Bacteria</taxon>
        <taxon>Pseudomonadati</taxon>
        <taxon>Campylobacterota</taxon>
        <taxon>Epsilonproteobacteria</taxon>
        <taxon>Campylobacterales</taxon>
        <taxon>Helicobacteraceae</taxon>
        <taxon>Helicobacter</taxon>
    </lineage>
</organism>
<accession>B2UV71</accession>
<name>RL24_HELPS</name>